<organism>
    <name type="scientific">Mus musculus</name>
    <name type="common">Mouse</name>
    <dbReference type="NCBI Taxonomy" id="10090"/>
    <lineage>
        <taxon>Eukaryota</taxon>
        <taxon>Metazoa</taxon>
        <taxon>Chordata</taxon>
        <taxon>Craniata</taxon>
        <taxon>Vertebrata</taxon>
        <taxon>Euteleostomi</taxon>
        <taxon>Mammalia</taxon>
        <taxon>Eutheria</taxon>
        <taxon>Euarchontoglires</taxon>
        <taxon>Glires</taxon>
        <taxon>Rodentia</taxon>
        <taxon>Myomorpha</taxon>
        <taxon>Muroidea</taxon>
        <taxon>Muridae</taxon>
        <taxon>Murinae</taxon>
        <taxon>Mus</taxon>
        <taxon>Mus</taxon>
    </lineage>
</organism>
<proteinExistence type="evidence at protein level"/>
<accession>Q8CFZ4</accession>
<keyword id="KW-0002">3D-structure</keyword>
<keyword id="KW-1003">Cell membrane</keyword>
<keyword id="KW-1015">Disulfide bond</keyword>
<keyword id="KW-0325">Glycoprotein</keyword>
<keyword id="KW-0336">GPI-anchor</keyword>
<keyword id="KW-0357">Heparan sulfate</keyword>
<keyword id="KW-0449">Lipoprotein</keyword>
<keyword id="KW-0472">Membrane</keyword>
<keyword id="KW-0597">Phosphoprotein</keyword>
<keyword id="KW-0646">Protease inhibitor</keyword>
<keyword id="KW-0654">Proteoglycan</keyword>
<keyword id="KW-0873">Pyrrolidone carboxylic acid</keyword>
<keyword id="KW-1185">Reference proteome</keyword>
<keyword id="KW-0732">Signal</keyword>
<dbReference type="EMBL" id="BC036126">
    <property type="protein sequence ID" value="AAH36126.1"/>
    <property type="molecule type" value="mRNA"/>
</dbReference>
<dbReference type="CCDS" id="CCDS30125.1"/>
<dbReference type="RefSeq" id="NP_057906.2">
    <property type="nucleotide sequence ID" value="NM_016697.3"/>
</dbReference>
<dbReference type="PDB" id="7ZA2">
    <property type="method" value="X-ray"/>
    <property type="resolution" value="4.60 A"/>
    <property type="chains" value="A/B/C/D=31-482"/>
</dbReference>
<dbReference type="PDB" id="7ZA3">
    <property type="method" value="X-ray"/>
    <property type="resolution" value="4.00 A"/>
    <property type="chains" value="A/B/C/D=31-482"/>
</dbReference>
<dbReference type="PDB" id="7ZAV">
    <property type="method" value="X-ray"/>
    <property type="resolution" value="2.90 A"/>
    <property type="chains" value="A=31-482"/>
</dbReference>
<dbReference type="PDBsum" id="7ZA2"/>
<dbReference type="PDBsum" id="7ZA3"/>
<dbReference type="PDBsum" id="7ZAV"/>
<dbReference type="SMR" id="Q8CFZ4"/>
<dbReference type="BioGRID" id="200013">
    <property type="interactions" value="3"/>
</dbReference>
<dbReference type="FunCoup" id="Q8CFZ4">
    <property type="interactions" value="185"/>
</dbReference>
<dbReference type="IntAct" id="Q8CFZ4">
    <property type="interactions" value="3"/>
</dbReference>
<dbReference type="STRING" id="10090.ENSMUSP00000064131"/>
<dbReference type="GlyCosmos" id="Q8CFZ4">
    <property type="glycosylation" value="5 sites, No reported glycans"/>
</dbReference>
<dbReference type="GlyGen" id="Q8CFZ4">
    <property type="glycosylation" value="5 sites, 2 N-linked glycans (2 sites)"/>
</dbReference>
<dbReference type="PhosphoSitePlus" id="Q8CFZ4"/>
<dbReference type="PaxDb" id="10090-ENSMUSP00000064131"/>
<dbReference type="ProteomicsDB" id="271429"/>
<dbReference type="Antibodypedia" id="424">
    <property type="antibodies" value="1584 antibodies from 43 providers"/>
</dbReference>
<dbReference type="DNASU" id="14734"/>
<dbReference type="Ensembl" id="ENSMUST00000069360.14">
    <property type="protein sequence ID" value="ENSMUSP00000064131.8"/>
    <property type="gene ID" value="ENSMUSG00000055653.14"/>
</dbReference>
<dbReference type="GeneID" id="14734"/>
<dbReference type="KEGG" id="mmu:14734"/>
<dbReference type="UCSC" id="uc009teg.2">
    <property type="organism name" value="mouse"/>
</dbReference>
<dbReference type="AGR" id="MGI:104903"/>
<dbReference type="CTD" id="2719"/>
<dbReference type="MGI" id="MGI:104903">
    <property type="gene designation" value="Gpc3"/>
</dbReference>
<dbReference type="VEuPathDB" id="HostDB:ENSMUSG00000055653"/>
<dbReference type="eggNOG" id="KOG3821">
    <property type="taxonomic scope" value="Eukaryota"/>
</dbReference>
<dbReference type="GeneTree" id="ENSGT01050000244955"/>
<dbReference type="HOGENOM" id="CLU_024658_4_2_1"/>
<dbReference type="InParanoid" id="Q8CFZ4"/>
<dbReference type="OMA" id="TNSMFRS"/>
<dbReference type="OrthoDB" id="6380619at2759"/>
<dbReference type="PhylomeDB" id="Q8CFZ4"/>
<dbReference type="TreeFam" id="TF105317"/>
<dbReference type="Reactome" id="R-MMU-1971475">
    <property type="pathway name" value="A tetrasaccharide linker sequence is required for GAG synthesis"/>
</dbReference>
<dbReference type="Reactome" id="R-MMU-2022928">
    <property type="pathway name" value="HS-GAG biosynthesis"/>
</dbReference>
<dbReference type="Reactome" id="R-MMU-2024096">
    <property type="pathway name" value="HS-GAG degradation"/>
</dbReference>
<dbReference type="Reactome" id="R-MMU-381426">
    <property type="pathway name" value="Regulation of Insulin-like Growth Factor (IGF) transport and uptake by Insulin-like Growth Factor Binding Proteins (IGFBPs)"/>
</dbReference>
<dbReference type="Reactome" id="R-MMU-8957275">
    <property type="pathway name" value="Post-translational protein phosphorylation"/>
</dbReference>
<dbReference type="Reactome" id="R-MMU-975634">
    <property type="pathway name" value="Retinoid metabolism and transport"/>
</dbReference>
<dbReference type="BioGRID-ORCS" id="14734">
    <property type="hits" value="4 hits in 78 CRISPR screens"/>
</dbReference>
<dbReference type="ChiTaRS" id="Gpc3">
    <property type="organism name" value="mouse"/>
</dbReference>
<dbReference type="PRO" id="PR:Q8CFZ4"/>
<dbReference type="Proteomes" id="UP000000589">
    <property type="component" value="Chromosome X"/>
</dbReference>
<dbReference type="RNAct" id="Q8CFZ4">
    <property type="molecule type" value="protein"/>
</dbReference>
<dbReference type="Bgee" id="ENSMUSG00000055653">
    <property type="expression patterns" value="Expressed in umbilical cord and 219 other cell types or tissues"/>
</dbReference>
<dbReference type="ExpressionAtlas" id="Q8CFZ4">
    <property type="expression patterns" value="baseline and differential"/>
</dbReference>
<dbReference type="GO" id="GO:0005796">
    <property type="term" value="C:Golgi lumen"/>
    <property type="evidence" value="ECO:0000304"/>
    <property type="project" value="Reactome"/>
</dbReference>
<dbReference type="GO" id="GO:0005764">
    <property type="term" value="C:lysosome"/>
    <property type="evidence" value="ECO:0000314"/>
    <property type="project" value="MGI"/>
</dbReference>
<dbReference type="GO" id="GO:0005886">
    <property type="term" value="C:plasma membrane"/>
    <property type="evidence" value="ECO:0000314"/>
    <property type="project" value="MGI"/>
</dbReference>
<dbReference type="GO" id="GO:0098552">
    <property type="term" value="C:side of membrane"/>
    <property type="evidence" value="ECO:0007669"/>
    <property type="project" value="UniProtKB-KW"/>
</dbReference>
<dbReference type="GO" id="GO:0060422">
    <property type="term" value="F:peptidyl-dipeptidase inhibitor activity"/>
    <property type="evidence" value="ECO:0000250"/>
    <property type="project" value="UniProtKB"/>
</dbReference>
<dbReference type="GO" id="GO:0009887">
    <property type="term" value="P:animal organ morphogenesis"/>
    <property type="evidence" value="ECO:0000315"/>
    <property type="project" value="MGI"/>
</dbReference>
<dbReference type="GO" id="GO:0009948">
    <property type="term" value="P:anterior/posterior axis specification"/>
    <property type="evidence" value="ECO:0000316"/>
    <property type="project" value="MGI"/>
</dbReference>
<dbReference type="GO" id="GO:0010171">
    <property type="term" value="P:body morphogenesis"/>
    <property type="evidence" value="ECO:0000315"/>
    <property type="project" value="MGI"/>
</dbReference>
<dbReference type="GO" id="GO:0030282">
    <property type="term" value="P:bone mineralization"/>
    <property type="evidence" value="ECO:0000315"/>
    <property type="project" value="MGI"/>
</dbReference>
<dbReference type="GO" id="GO:0001658">
    <property type="term" value="P:branching involved in ureteric bud morphogenesis"/>
    <property type="evidence" value="ECO:0000316"/>
    <property type="project" value="MGI"/>
</dbReference>
<dbReference type="GO" id="GO:0060070">
    <property type="term" value="P:canonical Wnt signaling pathway"/>
    <property type="evidence" value="ECO:0000315"/>
    <property type="project" value="MGI"/>
</dbReference>
<dbReference type="GO" id="GO:0042074">
    <property type="term" value="P:cell migration involved in gastrulation"/>
    <property type="evidence" value="ECO:0000250"/>
    <property type="project" value="UniProtKB"/>
</dbReference>
<dbReference type="GO" id="GO:0072111">
    <property type="term" value="P:cell proliferation involved in kidney development"/>
    <property type="evidence" value="ECO:0000315"/>
    <property type="project" value="MGI"/>
</dbReference>
<dbReference type="GO" id="GO:0072203">
    <property type="term" value="P:cell proliferation involved in metanephros development"/>
    <property type="evidence" value="ECO:0000315"/>
    <property type="project" value="MGI"/>
</dbReference>
<dbReference type="GO" id="GO:0060976">
    <property type="term" value="P:coronary vasculature development"/>
    <property type="evidence" value="ECO:0000315"/>
    <property type="project" value="MGI"/>
</dbReference>
<dbReference type="GO" id="GO:0035116">
    <property type="term" value="P:embryonic hindlimb morphogenesis"/>
    <property type="evidence" value="ECO:0000316"/>
    <property type="project" value="MGI"/>
</dbReference>
<dbReference type="GO" id="GO:0050673">
    <property type="term" value="P:epithelial cell proliferation"/>
    <property type="evidence" value="ECO:0000315"/>
    <property type="project" value="MGI"/>
</dbReference>
<dbReference type="GO" id="GO:0001822">
    <property type="term" value="P:kidney development"/>
    <property type="evidence" value="ECO:0000315"/>
    <property type="project" value="MGI"/>
</dbReference>
<dbReference type="GO" id="GO:0030324">
    <property type="term" value="P:lung development"/>
    <property type="evidence" value="ECO:0000315"/>
    <property type="project" value="MGI"/>
</dbReference>
<dbReference type="GO" id="GO:0072138">
    <property type="term" value="P:mesenchymal cell proliferation involved in ureteric bud development"/>
    <property type="evidence" value="ECO:0000315"/>
    <property type="project" value="UniProtKB"/>
</dbReference>
<dbReference type="GO" id="GO:0072180">
    <property type="term" value="P:mesonephric duct morphogenesis"/>
    <property type="evidence" value="ECO:0000315"/>
    <property type="project" value="MGI"/>
</dbReference>
<dbReference type="GO" id="GO:0090090">
    <property type="term" value="P:negative regulation of canonical Wnt signaling pathway"/>
    <property type="evidence" value="ECO:0000315"/>
    <property type="project" value="MGI"/>
</dbReference>
<dbReference type="GO" id="GO:0008285">
    <property type="term" value="P:negative regulation of cell population proliferation"/>
    <property type="evidence" value="ECO:0000316"/>
    <property type="project" value="MGI"/>
</dbReference>
<dbReference type="GO" id="GO:0050680">
    <property type="term" value="P:negative regulation of epithelial cell proliferation"/>
    <property type="evidence" value="ECO:0000315"/>
    <property type="project" value="MGI"/>
</dbReference>
<dbReference type="GO" id="GO:0045926">
    <property type="term" value="P:negative regulation of growth"/>
    <property type="evidence" value="ECO:0000315"/>
    <property type="project" value="MGI"/>
</dbReference>
<dbReference type="GO" id="GO:0045879">
    <property type="term" value="P:negative regulation of smoothened signaling pathway"/>
    <property type="evidence" value="ECO:0000315"/>
    <property type="project" value="MGI"/>
</dbReference>
<dbReference type="GO" id="GO:0030316">
    <property type="term" value="P:osteoclast differentiation"/>
    <property type="evidence" value="ECO:0000315"/>
    <property type="project" value="MGI"/>
</dbReference>
<dbReference type="GO" id="GO:0030513">
    <property type="term" value="P:positive regulation of BMP signaling pathway"/>
    <property type="evidence" value="ECO:0000315"/>
    <property type="project" value="MGI"/>
</dbReference>
<dbReference type="GO" id="GO:0090263">
    <property type="term" value="P:positive regulation of canonical Wnt signaling pathway"/>
    <property type="evidence" value="ECO:0000250"/>
    <property type="project" value="UniProtKB"/>
</dbReference>
<dbReference type="GO" id="GO:0046326">
    <property type="term" value="P:positive regulation of D-glucose import"/>
    <property type="evidence" value="ECO:0000314"/>
    <property type="project" value="MGI"/>
</dbReference>
<dbReference type="GO" id="GO:0045807">
    <property type="term" value="P:positive regulation of endocytosis"/>
    <property type="evidence" value="ECO:0000314"/>
    <property type="project" value="MGI"/>
</dbReference>
<dbReference type="GO" id="GO:0045732">
    <property type="term" value="P:positive regulation of protein catabolic process"/>
    <property type="evidence" value="ECO:0000314"/>
    <property type="project" value="MGI"/>
</dbReference>
<dbReference type="GO" id="GO:0045880">
    <property type="term" value="P:positive regulation of smoothened signaling pathway"/>
    <property type="evidence" value="ECO:0000315"/>
    <property type="project" value="MGI"/>
</dbReference>
<dbReference type="GO" id="GO:2000096">
    <property type="term" value="P:positive regulation of Wnt signaling pathway, planar cell polarity pathway"/>
    <property type="evidence" value="ECO:0000315"/>
    <property type="project" value="MGI"/>
</dbReference>
<dbReference type="GO" id="GO:0060828">
    <property type="term" value="P:regulation of canonical Wnt signaling pathway"/>
    <property type="evidence" value="ECO:0000250"/>
    <property type="project" value="UniProtKB"/>
</dbReference>
<dbReference type="GO" id="GO:0040008">
    <property type="term" value="P:regulation of growth"/>
    <property type="evidence" value="ECO:0000315"/>
    <property type="project" value="MGI"/>
</dbReference>
<dbReference type="GO" id="GO:2000050">
    <property type="term" value="P:regulation of non-canonical Wnt signaling pathway"/>
    <property type="evidence" value="ECO:0000250"/>
    <property type="project" value="UniProtKB"/>
</dbReference>
<dbReference type="GO" id="GO:0009617">
    <property type="term" value="P:response to bacterium"/>
    <property type="evidence" value="ECO:0000270"/>
    <property type="project" value="MGI"/>
</dbReference>
<dbReference type="GO" id="GO:0007224">
    <property type="term" value="P:smoothened signaling pathway"/>
    <property type="evidence" value="ECO:0000315"/>
    <property type="project" value="MGI"/>
</dbReference>
<dbReference type="GO" id="GO:0060071">
    <property type="term" value="P:Wnt signaling pathway, planar cell polarity pathway"/>
    <property type="evidence" value="ECO:0000315"/>
    <property type="project" value="MGI"/>
</dbReference>
<dbReference type="InterPro" id="IPR001863">
    <property type="entry name" value="Glypican"/>
</dbReference>
<dbReference type="InterPro" id="IPR019803">
    <property type="entry name" value="Glypican_CS"/>
</dbReference>
<dbReference type="PANTHER" id="PTHR10822">
    <property type="entry name" value="GLYPICAN"/>
    <property type="match status" value="1"/>
</dbReference>
<dbReference type="PANTHER" id="PTHR10822:SF4">
    <property type="entry name" value="GLYPICAN-3"/>
    <property type="match status" value="1"/>
</dbReference>
<dbReference type="Pfam" id="PF01153">
    <property type="entry name" value="Glypican"/>
    <property type="match status" value="1"/>
</dbReference>
<dbReference type="PROSITE" id="PS01207">
    <property type="entry name" value="GLYPICAN"/>
    <property type="match status" value="1"/>
</dbReference>
<comment type="function">
    <text evidence="3 4 8 9 10 11 12 13">Cell surface proteoglycan (By similarity). Negatively regulates the hedgehog signaling pathway when attached via the GPI-anchor to the cell surface by competing with the hedgehog receptor PTC1 for binding to hedgehog proteins (PubMed:18477453, PubMed:23665349). Binding to the hedgehog protein SHH triggers internalization of the complex by endocytosis and its subsequent lysosomal degradation (PubMed:18477453). Positively regulates the canonical Wnt signaling pathway by binding to the Wnt receptor Frizzled and stimulating the binding of the Frizzled receptor to Wnt ligands (By similarity). Positively regulates the non-canonical Wnt signaling pathway (PubMed:15537637). Binds to CD81 which decreases the availability of free CD81 for binding to the transcriptional repressor HHEX, resulting in nuclear translocation of HHEX and transcriptional repression (PubMed:23665349). Inhibits the dipeptidyl peptidase activity of DPP4 (By similarity). Plays a role in limb patterning and skeletal development by controlling the cellular response to BMP4 (PubMed:10964473). Modulates the effects of growth factors BMP2, BMP7 and FGF7 on renal branching morphogenesis (PubMed:11180950). Required for coronary vascular development (PubMed:19733558). Plays a role in regulating cell movements during gastrulation (By similarity).</text>
</comment>
<comment type="subunit">
    <text evidence="1 3 11 13">Heterodimer; disulfide-linked (By similarity). Cleavage by a furin-like convertase results in production of alpha and beta chains which form a disulfide-linked heterodimer (By similarity). Interacts with DPP4 (By similarity). Interacts with FGF2 (By similarity). Interacts with WNT5A (By similarity). Also interacts with WNT3A and WNT7B (By similarity). Interacts with hedgehog protein SHH; the heparan sulfate chains are not required for the interaction (PubMed:18477453). Also interacts with hedgehog protein IHH (PubMed:23665349). Interacts with CD81 (PubMed:23665349). Interacts with Wnt receptors FZD4, FZD7 and FZD8; the heparan sulfate chains are required for the interaction (By similarity).</text>
</comment>
<comment type="subcellular location">
    <subcellularLocation>
        <location evidence="1">Cell membrane</location>
        <topology evidence="1">Lipid-anchor</topology>
        <topology evidence="1">GPI-anchor</topology>
        <orientation evidence="1">Extracellular side</orientation>
    </subcellularLocation>
</comment>
<comment type="tissue specificity">
    <text evidence="8 9">In the developing limb, absent from the apical epidermal ridge at 11 dpc but highly expressed in the underlying mesenchyme (PubMed:10964473). Expression in the mesenchyme at this stage is asymmetric with highest levels in the regions of the distal mesenchyme within the progress zone and within the proximal anterior and posterior limb bud (PubMed:10964473). At later developmental stages including 12.5 and 13.5 dpc, expression is restricted to the interdigital webs and the regions of chondrocytic differentiation of the developing bones (PubMed:10964473). In the embryonic kidney, expressed in both the ureteric bud and mesenchymal cells as early as 13.5 dpc (PubMed:11180950). Expression at 16.5 dpc is similar to that at 13.5 dpc but decreases by 18.5 dpc (PubMed:11180950).</text>
</comment>
<comment type="PTM">
    <text evidence="3">O-glycosylated; contains heparan sulfate and/or chondroitin sulfate.</text>
</comment>
<comment type="PTM">
    <text evidence="3">Cleaved intracellularly by a furin-like convertase to generate 2 subunits, alpha and beta, which remain associated through disulfide bonds and are associated with the cell surface via the GPI-anchor. This processing is essential for its role in inhibition of hedgehog signaling. A second proteolytic event may result in cleavage of the protein on the cell surface, separating it from the GPI-anchor and leading to its shedding from the cell surface.</text>
</comment>
<comment type="disruption phenotype">
    <text evidence="7 8 9 10 11 12">Perinatal death, developmental overgrowth, cystic and dyplastic kidneys, abnormal lung development and ventral wall closure defects (PubMed:10402475, PubMed:10964473). A proportion of mutants also display mandibular hypoplasia and an imperforate vagina (PubMed:10402475). There is an early and persistent abnormality in ureteric bud development in the kidney due to increased cell proliferation (PubMed:10402475). In the developing kidney, cell proliferation is increased threefold in cortical collecting duct cells and apoptosis is increased 16-fold in medullary collecting duct cells (PubMed:11180950). High incidence of congenital cardiac malformations including ventricular septal defects, common atrioventricular canal, double outlet right ventricle and presence of coronary artery fistulas (PubMed:19733558). Elevated levels of hedgehog pathway proteins Gli1 and Ptc1, indicative of activation of the hedgehog pathway and increased levels of Shh (PubMed:18477453). Reduced non-canonical Wnt signaling (PubMed:15537637). Similar levels of tissue and serum Igf2 to wild-type mice (PubMed:10402475).</text>
</comment>
<comment type="similarity">
    <text evidence="14">Belongs to the glypican family.</text>
</comment>
<protein>
    <recommendedName>
        <fullName>Glypican-3</fullName>
    </recommendedName>
    <component>
        <recommendedName>
            <fullName evidence="3">Glypican-3 alpha subunit</fullName>
        </recommendedName>
    </component>
    <component>
        <recommendedName>
            <fullName evidence="3">Glypican-3 beta subunit</fullName>
        </recommendedName>
    </component>
</protein>
<evidence type="ECO:0000250" key="1">
    <source>
        <dbReference type="UniProtKB" id="P13265"/>
    </source>
</evidence>
<evidence type="ECO:0000250" key="2">
    <source>
        <dbReference type="UniProtKB" id="P35052"/>
    </source>
</evidence>
<evidence type="ECO:0000250" key="3">
    <source>
        <dbReference type="UniProtKB" id="P51654"/>
    </source>
</evidence>
<evidence type="ECO:0000250" key="4">
    <source>
        <dbReference type="UniProtKB" id="Q6V9Y8"/>
    </source>
</evidence>
<evidence type="ECO:0000255" key="5"/>
<evidence type="ECO:0000256" key="6">
    <source>
        <dbReference type="SAM" id="MobiDB-lite"/>
    </source>
</evidence>
<evidence type="ECO:0000269" key="7">
    <source>
    </source>
</evidence>
<evidence type="ECO:0000269" key="8">
    <source>
    </source>
</evidence>
<evidence type="ECO:0000269" key="9">
    <source>
    </source>
</evidence>
<evidence type="ECO:0000269" key="10">
    <source>
    </source>
</evidence>
<evidence type="ECO:0000269" key="11">
    <source>
    </source>
</evidence>
<evidence type="ECO:0000269" key="12">
    <source>
    </source>
</evidence>
<evidence type="ECO:0000269" key="13">
    <source>
    </source>
</evidence>
<evidence type="ECO:0000305" key="14"/>
<evidence type="ECO:0007829" key="15">
    <source>
        <dbReference type="PDB" id="7ZAV"/>
    </source>
</evidence>
<reference key="1">
    <citation type="journal article" date="2004" name="Genome Res.">
        <title>The status, quality, and expansion of the NIH full-length cDNA project: the Mammalian Gene Collection (MGC).</title>
        <authorList>
            <consortium name="The MGC Project Team"/>
        </authorList>
    </citation>
    <scope>NUCLEOTIDE SEQUENCE [LARGE SCALE MRNA]</scope>
    <source>
        <strain>FVB/N</strain>
        <tissue>Kidney</tissue>
    </source>
</reference>
<reference key="2">
    <citation type="journal article" date="1999" name="J. Cell Biol.">
        <title>Glypican-3-deficient mice exhibit developmental overgrowth and some of the abnormalities typical of Simpson-Golabi-Behmel syndrome.</title>
        <authorList>
            <person name="Cano-Gauci D.F."/>
            <person name="Song H.H."/>
            <person name="Yang H."/>
            <person name="McKerlie C."/>
            <person name="Choo B."/>
            <person name="Shi W."/>
            <person name="Pullano R."/>
            <person name="Piscione T.D."/>
            <person name="Grisaru S."/>
            <person name="Soon S."/>
            <person name="Sedlackova L."/>
            <person name="Tanswell A.K."/>
            <person name="Mak T.W."/>
            <person name="Yeger H."/>
            <person name="Lockwood G.A."/>
            <person name="Rosenblum N.D."/>
            <person name="Filmus J."/>
        </authorList>
    </citation>
    <scope>DISRUPTION PHENOTYPE</scope>
</reference>
<reference key="3">
    <citation type="journal article" date="2000" name="Dev. Biol.">
        <title>glypican-3 controls cellular responses to Bmp4 in limb patterning and skeletal development.</title>
        <authorList>
            <person name="Paine-Saunders S."/>
            <person name="Viviano B.L."/>
            <person name="Zupicich J."/>
            <person name="Skarnes W.C."/>
            <person name="Saunders S."/>
        </authorList>
    </citation>
    <scope>FUNCTION</scope>
    <scope>TISSUE SPECIFICITY</scope>
    <scope>DISRUPTION PHENOTYPE</scope>
</reference>
<reference key="4">
    <citation type="journal article" date="2001" name="Dev. Biol.">
        <title>Glypican-3 modulates BMP- and FGF-mediated effects during renal branching morphogenesis.</title>
        <authorList>
            <person name="Grisaru S."/>
            <person name="Cano-Gauci D."/>
            <person name="Tee J."/>
            <person name="Filmus J."/>
            <person name="Rosenblum N.D."/>
        </authorList>
    </citation>
    <scope>FUNCTION</scope>
    <scope>TISSUE SPECIFICITY</scope>
    <scope>DISRUPTION PHENOTYPE</scope>
</reference>
<reference key="5">
    <citation type="journal article" date="2005" name="J. Biol. Chem.">
        <title>The loss of glypican-3 induces alterations in Wnt signaling.</title>
        <authorList>
            <person name="Song H.H."/>
            <person name="Shi W."/>
            <person name="Xiang Y.Y."/>
            <person name="Filmus J."/>
        </authorList>
    </citation>
    <scope>FUNCTION</scope>
    <scope>DISRUPTION PHENOTYPE</scope>
</reference>
<reference key="6">
    <citation type="journal article" date="2008" name="Dev. Cell">
        <title>Glypican-3 inhibits Hedgehog signaling during development by competing with patched for Hedgehog binding.</title>
        <authorList>
            <person name="Capurro M.I."/>
            <person name="Xu P."/>
            <person name="Shi W."/>
            <person name="Li F."/>
            <person name="Jia A."/>
            <person name="Filmus J."/>
        </authorList>
    </citation>
    <scope>FUNCTION</scope>
    <scope>INTERACTION WITH SHH</scope>
    <scope>DISRUPTION PHENOTYPE</scope>
</reference>
<reference key="7">
    <citation type="journal article" date="2009" name="Dev. Biol.">
        <title>Loss of glypican-3 function causes growth factor-dependent defects in cardiac and coronary vascular development.</title>
        <authorList>
            <person name="Ng A."/>
            <person name="Wong M."/>
            <person name="Viviano B."/>
            <person name="Erlich J.M."/>
            <person name="Alba G."/>
            <person name="Pflederer C."/>
            <person name="Jay P.Y."/>
            <person name="Saunders S."/>
        </authorList>
    </citation>
    <scope>FUNCTION</scope>
    <scope>DISRUPTION PHENOTYPE</scope>
</reference>
<reference key="8">
    <citation type="journal article" date="2013" name="Am. J. Pathol.">
        <title>Regulation of liver growth by glypican 3, CD81, hedgehog, and Hhex.</title>
        <authorList>
            <person name="Bhave V.S."/>
            <person name="Mars W."/>
            <person name="Donthamsetty S."/>
            <person name="Zhang X."/>
            <person name="Tan L."/>
            <person name="Luo J."/>
            <person name="Bowen W.C."/>
            <person name="Michalopoulos G.K."/>
        </authorList>
    </citation>
    <scope>FUNCTION</scope>
    <scope>INTERACTION WITH CD81 AND IHH</scope>
</reference>
<feature type="signal peptide" evidence="5">
    <location>
        <begin position="1"/>
        <end position="24"/>
    </location>
</feature>
<feature type="chain" id="PRO_0000445412" description="Glypican-3 alpha subunit" evidence="3">
    <location>
        <begin position="25"/>
        <end position="357"/>
    </location>
</feature>
<feature type="chain" id="PRO_0000445413" description="Glypican-3 beta subunit" evidence="3">
    <location>
        <begin position="358"/>
        <end position="553"/>
    </location>
</feature>
<feature type="propeptide" id="PRO_0000012312" description="Removed in mature form" evidence="5">
    <location>
        <begin position="554"/>
        <end position="579"/>
    </location>
</feature>
<feature type="region of interest" description="Disordered" evidence="6">
    <location>
        <begin position="533"/>
        <end position="552"/>
    </location>
</feature>
<feature type="modified residue" description="Pyrrolidone carboxylic acid" evidence="3">
    <location>
        <position position="25"/>
    </location>
</feature>
<feature type="modified residue" description="Phosphoserine" evidence="3">
    <location>
        <position position="351"/>
    </location>
</feature>
<feature type="lipid moiety-binding region" description="GPI-anchor amidated serine" evidence="5">
    <location>
        <position position="553"/>
    </location>
</feature>
<feature type="glycosylation site" description="N-linked (GlcNAc...) asparagine" evidence="5">
    <location>
        <position position="123"/>
    </location>
</feature>
<feature type="glycosylation site" description="N-linked (GlcNAc...) asparagine" evidence="5">
    <location>
        <position position="240"/>
    </location>
</feature>
<feature type="glycosylation site" description="N-linked (GlcNAc...) asparagine" evidence="5">
    <location>
        <position position="417"/>
    </location>
</feature>
<feature type="glycosylation site" description="O-linked (Xyl...) (glycosaminoglycan) serine" evidence="5">
    <location>
        <position position="494"/>
    </location>
</feature>
<feature type="glycosylation site" description="O-linked (Xyl...) (glycosaminoglycan) serine" evidence="5">
    <location>
        <position position="508"/>
    </location>
</feature>
<feature type="disulfide bond" evidence="2">
    <location>
        <begin position="34"/>
        <end position="71"/>
    </location>
</feature>
<feature type="disulfide bond" evidence="2">
    <location>
        <begin position="64"/>
        <end position="261"/>
    </location>
</feature>
<feature type="disulfide bond" evidence="2">
    <location>
        <begin position="72"/>
        <end position="264"/>
    </location>
</feature>
<feature type="disulfide bond" evidence="2">
    <location>
        <begin position="196"/>
        <end position="348"/>
    </location>
</feature>
<feature type="disulfide bond" evidence="2">
    <location>
        <begin position="251"/>
        <end position="284"/>
    </location>
</feature>
<feature type="disulfide bond" description="Interchain (between alpha and beta chains)" evidence="2">
    <location>
        <begin position="273"/>
        <end position="421"/>
    </location>
</feature>
<feature type="disulfide bond" description="Interchain (between alpha and beta chains)" evidence="2">
    <location>
        <begin position="277"/>
        <end position="409"/>
    </location>
</feature>
<feature type="strand" evidence="15">
    <location>
        <begin position="62"/>
        <end position="64"/>
    </location>
</feature>
<feature type="helix" evidence="15">
    <location>
        <begin position="75"/>
        <end position="132"/>
    </location>
</feature>
<feature type="helix" evidence="15">
    <location>
        <begin position="134"/>
        <end position="136"/>
    </location>
</feature>
<feature type="helix" evidence="15">
    <location>
        <begin position="139"/>
        <end position="155"/>
    </location>
</feature>
<feature type="helix" evidence="15">
    <location>
        <begin position="162"/>
        <end position="180"/>
    </location>
</feature>
<feature type="helix" evidence="15">
    <location>
        <begin position="194"/>
        <end position="203"/>
    </location>
</feature>
<feature type="turn" evidence="15">
    <location>
        <begin position="204"/>
        <end position="209"/>
    </location>
</feature>
<feature type="helix" evidence="15">
    <location>
        <begin position="210"/>
        <end position="242"/>
    </location>
</feature>
<feature type="helix" evidence="15">
    <location>
        <begin position="249"/>
        <end position="259"/>
    </location>
</feature>
<feature type="helix" evidence="15">
    <location>
        <begin position="261"/>
        <end position="264"/>
    </location>
</feature>
<feature type="helix" evidence="15">
    <location>
        <begin position="274"/>
        <end position="284"/>
    </location>
</feature>
<feature type="helix" evidence="15">
    <location>
        <begin position="286"/>
        <end position="289"/>
    </location>
</feature>
<feature type="helix" evidence="15">
    <location>
        <begin position="292"/>
        <end position="306"/>
    </location>
</feature>
<feature type="helix" evidence="15">
    <location>
        <begin position="316"/>
        <end position="319"/>
    </location>
</feature>
<feature type="helix" evidence="15">
    <location>
        <begin position="322"/>
        <end position="334"/>
    </location>
</feature>
<feature type="helix" evidence="15">
    <location>
        <begin position="337"/>
        <end position="347"/>
    </location>
</feature>
<feature type="helix" evidence="15">
    <location>
        <begin position="383"/>
        <end position="394"/>
    </location>
</feature>
<feature type="helix" evidence="15">
    <location>
        <begin position="395"/>
        <end position="397"/>
    </location>
</feature>
<feature type="turn" evidence="15">
    <location>
        <begin position="398"/>
        <end position="402"/>
    </location>
</feature>
<feature type="helix" evidence="15">
    <location>
        <begin position="404"/>
        <end position="411"/>
    </location>
</feature>
<feature type="strand" evidence="15">
    <location>
        <begin position="419"/>
        <end position="422"/>
    </location>
</feature>
<feature type="strand" evidence="15">
    <location>
        <begin position="424"/>
        <end position="430"/>
    </location>
</feature>
<feature type="helix" evidence="15">
    <location>
        <begin position="456"/>
        <end position="475"/>
    </location>
</feature>
<gene>
    <name type="primary">Gpc3</name>
</gene>
<sequence>MAGTVRTACLLVAMLLGLGCLGQAQPPPPPDATCHQVRSFFQRLQPGLKWVPETPVPGSDLQVCLPKGPTCCSRKMEEKYQLTARLNMEQLLQSASMELKFLIIQNAAVFQEAFEIVVRHAKNYTNAMFKNNYPSLTPQAFEFVGEFFTDVSLYILGSDINVDDMVNELFDSLFPVIYTQMMNPGLPESVLDINECLRGARRDLKVFGSFPKLIMTQVSKSLQVTRIFLQALNLGIEVINTTDHLKFSKDCGRMLTRMWYCSYCQGLMMVKPCGGYCNVVMQGCMAGVVEIDKYWREYILSLEELVNGMYRIYDMENVLLGLFSTIHDSIQYVQKNGGKLTTTIGKLCAHSQQRQYRSAYYPEDLFIDKKILKVAHVEHEETLSSRRRELIQKLKSFINFYSALPGYICSHSPVAENDTLCWNGQELVERYSQKAARNGMKNQFNLHELKMKGPEPVVSQIIDKLKHINQLLRTMSVPKGKVLDKSLDEEGLESGDCGDDEDECIGSSGDGMVKVKNQLRFLAELAYDLDVDDAPGNKQHGNQKDNEITTSHSVGNMPSPLKILISVAIYVACFFFLVH</sequence>
<name>GPC3_MOUSE</name>